<protein>
    <recommendedName>
        <fullName evidence="1">Acetylornithine deacetylase</fullName>
        <shortName evidence="1">AO</shortName>
        <shortName evidence="1">Acetylornithinase</shortName>
        <ecNumber evidence="1">3.5.1.16</ecNumber>
    </recommendedName>
    <alternativeName>
        <fullName evidence="1">N-acetylornithinase</fullName>
        <shortName evidence="1">NAO</shortName>
    </alternativeName>
</protein>
<organism>
    <name type="scientific">Salmonella paratyphi A (strain ATCC 9150 / SARB42)</name>
    <dbReference type="NCBI Taxonomy" id="295319"/>
    <lineage>
        <taxon>Bacteria</taxon>
        <taxon>Pseudomonadati</taxon>
        <taxon>Pseudomonadota</taxon>
        <taxon>Gammaproteobacteria</taxon>
        <taxon>Enterobacterales</taxon>
        <taxon>Enterobacteriaceae</taxon>
        <taxon>Salmonella</taxon>
    </lineage>
</organism>
<reference key="1">
    <citation type="journal article" date="2004" name="Nat. Genet.">
        <title>Comparison of genome degradation in Paratyphi A and Typhi, human-restricted serovars of Salmonella enterica that cause typhoid.</title>
        <authorList>
            <person name="McClelland M."/>
            <person name="Sanderson K.E."/>
            <person name="Clifton S.W."/>
            <person name="Latreille P."/>
            <person name="Porwollik S."/>
            <person name="Sabo A."/>
            <person name="Meyer R."/>
            <person name="Bieri T."/>
            <person name="Ozersky P."/>
            <person name="McLellan M."/>
            <person name="Harkins C.R."/>
            <person name="Wang C."/>
            <person name="Nguyen C."/>
            <person name="Berghoff A."/>
            <person name="Elliott G."/>
            <person name="Kohlberg S."/>
            <person name="Strong C."/>
            <person name="Du F."/>
            <person name="Carter J."/>
            <person name="Kremizki C."/>
            <person name="Layman D."/>
            <person name="Leonard S."/>
            <person name="Sun H."/>
            <person name="Fulton L."/>
            <person name="Nash W."/>
            <person name="Miner T."/>
            <person name="Minx P."/>
            <person name="Delehaunty K."/>
            <person name="Fronick C."/>
            <person name="Magrini V."/>
            <person name="Nhan M."/>
            <person name="Warren W."/>
            <person name="Florea L."/>
            <person name="Spieth J."/>
            <person name="Wilson R.K."/>
        </authorList>
    </citation>
    <scope>NUCLEOTIDE SEQUENCE [LARGE SCALE GENOMIC DNA]</scope>
    <source>
        <strain>ATCC 9150 / SARB42</strain>
    </source>
</reference>
<evidence type="ECO:0000255" key="1">
    <source>
        <dbReference type="HAMAP-Rule" id="MF_01108"/>
    </source>
</evidence>
<sequence length="383" mass="42203">MKNVLPPFIEIYRALIATPSISATEESLDQSNASLITLLAGWFSDLGFNVEVQPVPGTRNKFNMLASTGHGAGGLLLTGHTDTVPFDDGRWTRDPFTLTEHDNKLYGLGTADMKGFFAFILDALRDVDVTKLKKPLYILATADEETSMAGARYFSETTALRPDCAIIGEPTSLQPIRAHKGHISDVVRVLGQSGHSSDPARGVNAIELMHDAIGHIMQLRDSLKARYHYEAFTVPYPTLNLGHIHGGDASNRICACCELHMDIRPLPGMTLNDLNGLLNDALAPVSERWPGRLTVAELHPPIPGYECPPDHQLVEVVEKLLGTKTDVVNYCTEAPFMQTLCPTLVLGPGSINQAHQPDEYLETRFIKPTRELITQVVHHFCWH</sequence>
<keyword id="KW-0028">Amino-acid biosynthesis</keyword>
<keyword id="KW-0055">Arginine biosynthesis</keyword>
<keyword id="KW-0170">Cobalt</keyword>
<keyword id="KW-0963">Cytoplasm</keyword>
<keyword id="KW-0378">Hydrolase</keyword>
<keyword id="KW-0479">Metal-binding</keyword>
<keyword id="KW-0862">Zinc</keyword>
<proteinExistence type="inferred from homology"/>
<comment type="function">
    <text evidence="1">Catalyzes the hydrolysis of the amide bond of N(2)-acetylated L-amino acids. Cleaves the acetyl group from N-acetyl-L-ornithine to form L-ornithine, an intermediate in L-arginine biosynthesis pathway, and a branchpoint in the synthesis of polyamines.</text>
</comment>
<comment type="catalytic activity">
    <reaction evidence="1">
        <text>N(2)-acetyl-L-ornithine + H2O = L-ornithine + acetate</text>
        <dbReference type="Rhea" id="RHEA:15941"/>
        <dbReference type="ChEBI" id="CHEBI:15377"/>
        <dbReference type="ChEBI" id="CHEBI:30089"/>
        <dbReference type="ChEBI" id="CHEBI:46911"/>
        <dbReference type="ChEBI" id="CHEBI:57805"/>
        <dbReference type="EC" id="3.5.1.16"/>
    </reaction>
</comment>
<comment type="cofactor">
    <cofactor evidence="1">
        <name>Zn(2+)</name>
        <dbReference type="ChEBI" id="CHEBI:29105"/>
    </cofactor>
    <cofactor evidence="1">
        <name>Co(2+)</name>
        <dbReference type="ChEBI" id="CHEBI:48828"/>
    </cofactor>
    <text evidence="1">Binds 2 Zn(2+) or Co(2+) ions per subunit.</text>
</comment>
<comment type="cofactor">
    <cofactor evidence="1">
        <name>glutathione</name>
        <dbReference type="ChEBI" id="CHEBI:57925"/>
    </cofactor>
</comment>
<comment type="pathway">
    <text evidence="1">Amino-acid biosynthesis; L-arginine biosynthesis; L-ornithine from N(2)-acetyl-L-ornithine (linear): step 1/1.</text>
</comment>
<comment type="subunit">
    <text evidence="1">Homodimer.</text>
</comment>
<comment type="subcellular location">
    <subcellularLocation>
        <location evidence="1">Cytoplasm</location>
    </subcellularLocation>
</comment>
<comment type="similarity">
    <text evidence="1">Belongs to the peptidase M20A family. ArgE subfamily.</text>
</comment>
<accession>Q5PK76</accession>
<gene>
    <name evidence="1" type="primary">argE</name>
    <name type="ordered locus">SPA3958</name>
</gene>
<name>ARGE_SALPA</name>
<feature type="chain" id="PRO_1000065060" description="Acetylornithine deacetylase">
    <location>
        <begin position="1"/>
        <end position="383"/>
    </location>
</feature>
<feature type="active site" evidence="1">
    <location>
        <position position="82"/>
    </location>
</feature>
<feature type="active site" evidence="1">
    <location>
        <position position="144"/>
    </location>
</feature>
<feature type="binding site" evidence="1">
    <location>
        <position position="80"/>
    </location>
    <ligand>
        <name>Zn(2+)</name>
        <dbReference type="ChEBI" id="CHEBI:29105"/>
        <label>1</label>
    </ligand>
</feature>
<feature type="binding site" evidence="1">
    <location>
        <position position="112"/>
    </location>
    <ligand>
        <name>Zn(2+)</name>
        <dbReference type="ChEBI" id="CHEBI:29105"/>
        <label>1</label>
    </ligand>
</feature>
<feature type="binding site" evidence="1">
    <location>
        <position position="112"/>
    </location>
    <ligand>
        <name>Zn(2+)</name>
        <dbReference type="ChEBI" id="CHEBI:29105"/>
        <label>2</label>
    </ligand>
</feature>
<feature type="binding site" evidence="1">
    <location>
        <position position="145"/>
    </location>
    <ligand>
        <name>Zn(2+)</name>
        <dbReference type="ChEBI" id="CHEBI:29105"/>
        <label>2</label>
    </ligand>
</feature>
<feature type="binding site" evidence="1">
    <location>
        <position position="169"/>
    </location>
    <ligand>
        <name>Zn(2+)</name>
        <dbReference type="ChEBI" id="CHEBI:29105"/>
        <label>1</label>
    </ligand>
</feature>
<feature type="binding site" evidence="1">
    <location>
        <position position="355"/>
    </location>
    <ligand>
        <name>Zn(2+)</name>
        <dbReference type="ChEBI" id="CHEBI:29105"/>
        <label>2</label>
    </ligand>
</feature>
<dbReference type="EC" id="3.5.1.16" evidence="1"/>
<dbReference type="EMBL" id="CP000026">
    <property type="protein sequence ID" value="AAV79721.1"/>
    <property type="molecule type" value="Genomic_DNA"/>
</dbReference>
<dbReference type="RefSeq" id="WP_000800204.1">
    <property type="nucleotide sequence ID" value="NC_006511.1"/>
</dbReference>
<dbReference type="SMR" id="Q5PK76"/>
<dbReference type="MEROPS" id="M20.974"/>
<dbReference type="KEGG" id="spt:SPA3958"/>
<dbReference type="HOGENOM" id="CLU_021802_2_4_6"/>
<dbReference type="UniPathway" id="UPA00068">
    <property type="reaction ID" value="UER00110"/>
</dbReference>
<dbReference type="Proteomes" id="UP000008185">
    <property type="component" value="Chromosome"/>
</dbReference>
<dbReference type="GO" id="GO:0005737">
    <property type="term" value="C:cytoplasm"/>
    <property type="evidence" value="ECO:0007669"/>
    <property type="project" value="UniProtKB-SubCell"/>
</dbReference>
<dbReference type="GO" id="GO:0008777">
    <property type="term" value="F:acetylornithine deacetylase activity"/>
    <property type="evidence" value="ECO:0007669"/>
    <property type="project" value="UniProtKB-UniRule"/>
</dbReference>
<dbReference type="GO" id="GO:0008270">
    <property type="term" value="F:zinc ion binding"/>
    <property type="evidence" value="ECO:0007669"/>
    <property type="project" value="UniProtKB-UniRule"/>
</dbReference>
<dbReference type="GO" id="GO:0006526">
    <property type="term" value="P:L-arginine biosynthetic process"/>
    <property type="evidence" value="ECO:0007669"/>
    <property type="project" value="UniProtKB-UniRule"/>
</dbReference>
<dbReference type="CDD" id="cd03894">
    <property type="entry name" value="M20_ArgE"/>
    <property type="match status" value="1"/>
</dbReference>
<dbReference type="FunFam" id="3.30.70.360:FF:000003">
    <property type="entry name" value="Acetylornithine deacetylase"/>
    <property type="match status" value="1"/>
</dbReference>
<dbReference type="Gene3D" id="3.30.70.360">
    <property type="match status" value="1"/>
</dbReference>
<dbReference type="Gene3D" id="3.40.630.10">
    <property type="entry name" value="Zn peptidases"/>
    <property type="match status" value="1"/>
</dbReference>
<dbReference type="HAMAP" id="MF_01108">
    <property type="entry name" value="ArgE"/>
    <property type="match status" value="1"/>
</dbReference>
<dbReference type="InterPro" id="IPR010169">
    <property type="entry name" value="AcOrn-deacetyl"/>
</dbReference>
<dbReference type="InterPro" id="IPR001261">
    <property type="entry name" value="ArgE/DapE_CS"/>
</dbReference>
<dbReference type="InterPro" id="IPR036264">
    <property type="entry name" value="Bact_exopeptidase_dim_dom"/>
</dbReference>
<dbReference type="InterPro" id="IPR002933">
    <property type="entry name" value="Peptidase_M20"/>
</dbReference>
<dbReference type="InterPro" id="IPR011650">
    <property type="entry name" value="Peptidase_M20_dimer"/>
</dbReference>
<dbReference type="InterPro" id="IPR050072">
    <property type="entry name" value="Peptidase_M20A"/>
</dbReference>
<dbReference type="NCBIfam" id="TIGR01892">
    <property type="entry name" value="AcOrn-deacetyl"/>
    <property type="match status" value="1"/>
</dbReference>
<dbReference type="NCBIfam" id="NF003474">
    <property type="entry name" value="PRK05111.1"/>
    <property type="match status" value="1"/>
</dbReference>
<dbReference type="PANTHER" id="PTHR43808">
    <property type="entry name" value="ACETYLORNITHINE DEACETYLASE"/>
    <property type="match status" value="1"/>
</dbReference>
<dbReference type="PANTHER" id="PTHR43808:SF1">
    <property type="entry name" value="ACETYLORNITHINE DEACETYLASE"/>
    <property type="match status" value="1"/>
</dbReference>
<dbReference type="Pfam" id="PF07687">
    <property type="entry name" value="M20_dimer"/>
    <property type="match status" value="1"/>
</dbReference>
<dbReference type="Pfam" id="PF01546">
    <property type="entry name" value="Peptidase_M20"/>
    <property type="match status" value="1"/>
</dbReference>
<dbReference type="SUPFAM" id="SSF55031">
    <property type="entry name" value="Bacterial exopeptidase dimerisation domain"/>
    <property type="match status" value="1"/>
</dbReference>
<dbReference type="SUPFAM" id="SSF53187">
    <property type="entry name" value="Zn-dependent exopeptidases"/>
    <property type="match status" value="1"/>
</dbReference>
<dbReference type="PROSITE" id="PS00758">
    <property type="entry name" value="ARGE_DAPE_CPG2_1"/>
    <property type="match status" value="1"/>
</dbReference>
<dbReference type="PROSITE" id="PS00759">
    <property type="entry name" value="ARGE_DAPE_CPG2_2"/>
    <property type="match status" value="1"/>
</dbReference>